<dbReference type="EC" id="5.3.1.23" evidence="1"/>
<dbReference type="EMBL" id="CP000478">
    <property type="protein sequence ID" value="ABK17393.1"/>
    <property type="molecule type" value="Genomic_DNA"/>
</dbReference>
<dbReference type="RefSeq" id="WP_011698563.1">
    <property type="nucleotide sequence ID" value="NC_008554.1"/>
</dbReference>
<dbReference type="SMR" id="A0LIZ1"/>
<dbReference type="STRING" id="335543.Sfum_1706"/>
<dbReference type="KEGG" id="sfu:Sfum_1706"/>
<dbReference type="eggNOG" id="COG0182">
    <property type="taxonomic scope" value="Bacteria"/>
</dbReference>
<dbReference type="HOGENOM" id="CLU_016218_1_2_7"/>
<dbReference type="InParanoid" id="A0LIZ1"/>
<dbReference type="OrthoDB" id="9803436at2"/>
<dbReference type="UniPathway" id="UPA00904">
    <property type="reaction ID" value="UER00874"/>
</dbReference>
<dbReference type="Proteomes" id="UP000001784">
    <property type="component" value="Chromosome"/>
</dbReference>
<dbReference type="GO" id="GO:0046523">
    <property type="term" value="F:S-methyl-5-thioribose-1-phosphate isomerase activity"/>
    <property type="evidence" value="ECO:0007669"/>
    <property type="project" value="UniProtKB-UniRule"/>
</dbReference>
<dbReference type="GO" id="GO:0019509">
    <property type="term" value="P:L-methionine salvage from methylthioadenosine"/>
    <property type="evidence" value="ECO:0007669"/>
    <property type="project" value="UniProtKB-UniRule"/>
</dbReference>
<dbReference type="FunFam" id="1.20.120.420:FF:000003">
    <property type="entry name" value="Methylthioribose-1-phosphate isomerase"/>
    <property type="match status" value="1"/>
</dbReference>
<dbReference type="FunFam" id="3.40.50.10470:FF:000006">
    <property type="entry name" value="Methylthioribose-1-phosphate isomerase"/>
    <property type="match status" value="1"/>
</dbReference>
<dbReference type="Gene3D" id="1.20.120.420">
    <property type="entry name" value="translation initiation factor eif-2b, domain 1"/>
    <property type="match status" value="1"/>
</dbReference>
<dbReference type="Gene3D" id="3.40.50.10470">
    <property type="entry name" value="Translation initiation factor eif-2b, domain 2"/>
    <property type="match status" value="1"/>
</dbReference>
<dbReference type="HAMAP" id="MF_01678">
    <property type="entry name" value="Salvage_MtnA"/>
    <property type="match status" value="1"/>
</dbReference>
<dbReference type="InterPro" id="IPR000649">
    <property type="entry name" value="IF-2B-related"/>
</dbReference>
<dbReference type="InterPro" id="IPR005251">
    <property type="entry name" value="IF-M1Pi"/>
</dbReference>
<dbReference type="InterPro" id="IPR042529">
    <property type="entry name" value="IF_2B-like_C"/>
</dbReference>
<dbReference type="InterPro" id="IPR011559">
    <property type="entry name" value="Initiation_fac_2B_a/b/d"/>
</dbReference>
<dbReference type="InterPro" id="IPR027363">
    <property type="entry name" value="M1Pi_N"/>
</dbReference>
<dbReference type="InterPro" id="IPR037171">
    <property type="entry name" value="NagB/RpiA_transferase-like"/>
</dbReference>
<dbReference type="NCBIfam" id="TIGR00524">
    <property type="entry name" value="eIF-2B_rel"/>
    <property type="match status" value="1"/>
</dbReference>
<dbReference type="NCBIfam" id="NF004326">
    <property type="entry name" value="PRK05720.1"/>
    <property type="match status" value="1"/>
</dbReference>
<dbReference type="NCBIfam" id="TIGR00512">
    <property type="entry name" value="salvage_mtnA"/>
    <property type="match status" value="1"/>
</dbReference>
<dbReference type="PANTHER" id="PTHR43475">
    <property type="entry name" value="METHYLTHIORIBOSE-1-PHOSPHATE ISOMERASE"/>
    <property type="match status" value="1"/>
</dbReference>
<dbReference type="PANTHER" id="PTHR43475:SF1">
    <property type="entry name" value="METHYLTHIORIBOSE-1-PHOSPHATE ISOMERASE"/>
    <property type="match status" value="1"/>
</dbReference>
<dbReference type="Pfam" id="PF01008">
    <property type="entry name" value="IF-2B"/>
    <property type="match status" value="1"/>
</dbReference>
<dbReference type="SUPFAM" id="SSF100950">
    <property type="entry name" value="NagB/RpiA/CoA transferase-like"/>
    <property type="match status" value="1"/>
</dbReference>
<gene>
    <name evidence="1" type="primary">mtnA</name>
    <name type="ordered locus">Sfum_1706</name>
</gene>
<accession>A0LIZ1</accession>
<comment type="function">
    <text evidence="1">Catalyzes the interconversion of methylthioribose-1-phosphate (MTR-1-P) into methylthioribulose-1-phosphate (MTRu-1-P).</text>
</comment>
<comment type="catalytic activity">
    <reaction evidence="1">
        <text>5-(methylsulfanyl)-alpha-D-ribose 1-phosphate = 5-(methylsulfanyl)-D-ribulose 1-phosphate</text>
        <dbReference type="Rhea" id="RHEA:19989"/>
        <dbReference type="ChEBI" id="CHEBI:58533"/>
        <dbReference type="ChEBI" id="CHEBI:58548"/>
        <dbReference type="EC" id="5.3.1.23"/>
    </reaction>
</comment>
<comment type="pathway">
    <text evidence="1">Amino-acid biosynthesis; L-methionine biosynthesis via salvage pathway; L-methionine from S-methyl-5-thio-alpha-D-ribose 1-phosphate: step 1/6.</text>
</comment>
<comment type="similarity">
    <text evidence="2">Belongs to the eIF-2B alpha/beta/delta subunits family. MtnA subfamily.</text>
</comment>
<evidence type="ECO:0000255" key="1">
    <source>
        <dbReference type="HAMAP-Rule" id="MF_01678"/>
    </source>
</evidence>
<evidence type="ECO:0000305" key="2"/>
<feature type="chain" id="PRO_0000357253" description="Methylthioribose-1-phosphate isomerase">
    <location>
        <begin position="1"/>
        <end position="349"/>
    </location>
</feature>
<feature type="active site" description="Proton donor" evidence="1">
    <location>
        <position position="240"/>
    </location>
</feature>
<feature type="binding site" evidence="1">
    <location>
        <begin position="49"/>
        <end position="51"/>
    </location>
    <ligand>
        <name>substrate</name>
    </ligand>
</feature>
<feature type="binding site" evidence="1">
    <location>
        <position position="92"/>
    </location>
    <ligand>
        <name>substrate</name>
    </ligand>
</feature>
<feature type="binding site" evidence="1">
    <location>
        <position position="199"/>
    </location>
    <ligand>
        <name>substrate</name>
    </ligand>
</feature>
<feature type="binding site" evidence="1">
    <location>
        <begin position="250"/>
        <end position="251"/>
    </location>
    <ligand>
        <name>substrate</name>
    </ligand>
</feature>
<feature type="site" description="Transition state stabilizer" evidence="1">
    <location>
        <position position="160"/>
    </location>
</feature>
<organism>
    <name type="scientific">Syntrophobacter fumaroxidans (strain DSM 10017 / MPOB)</name>
    <dbReference type="NCBI Taxonomy" id="335543"/>
    <lineage>
        <taxon>Bacteria</taxon>
        <taxon>Pseudomonadati</taxon>
        <taxon>Thermodesulfobacteriota</taxon>
        <taxon>Syntrophobacteria</taxon>
        <taxon>Syntrophobacterales</taxon>
        <taxon>Syntrophobacteraceae</taxon>
        <taxon>Syntrophobacter</taxon>
    </lineage>
</organism>
<keyword id="KW-0028">Amino-acid biosynthesis</keyword>
<keyword id="KW-0413">Isomerase</keyword>
<keyword id="KW-0486">Methionine biosynthesis</keyword>
<keyword id="KW-1185">Reference proteome</keyword>
<protein>
    <recommendedName>
        <fullName evidence="1">Methylthioribose-1-phosphate isomerase</fullName>
        <shortName evidence="1">M1Pi</shortName>
        <shortName evidence="1">MTR-1-P isomerase</shortName>
        <ecNumber evidence="1">5.3.1.23</ecNumber>
    </recommendedName>
    <alternativeName>
        <fullName evidence="1">S-methyl-5-thioribose-1-phosphate isomerase</fullName>
    </alternativeName>
</protein>
<reference key="1">
    <citation type="submission" date="2006-10" db="EMBL/GenBank/DDBJ databases">
        <title>Complete sequence of Syntrophobacter fumaroxidans MPOB.</title>
        <authorList>
            <consortium name="US DOE Joint Genome Institute"/>
            <person name="Copeland A."/>
            <person name="Lucas S."/>
            <person name="Lapidus A."/>
            <person name="Barry K."/>
            <person name="Detter J.C."/>
            <person name="Glavina del Rio T."/>
            <person name="Hammon N."/>
            <person name="Israni S."/>
            <person name="Pitluck S."/>
            <person name="Goltsman E.G."/>
            <person name="Martinez M."/>
            <person name="Schmutz J."/>
            <person name="Larimer F."/>
            <person name="Land M."/>
            <person name="Hauser L."/>
            <person name="Kyrpides N."/>
            <person name="Kim E."/>
            <person name="Boone D.R."/>
            <person name="Brockman F."/>
            <person name="Culley D."/>
            <person name="Ferry J."/>
            <person name="Gunsalus R."/>
            <person name="McInerney M.J."/>
            <person name="Morrison M."/>
            <person name="Plugge C."/>
            <person name="Rohlin L."/>
            <person name="Scholten J."/>
            <person name="Sieber J."/>
            <person name="Stams A.J.M."/>
            <person name="Worm P."/>
            <person name="Henstra A.M."/>
            <person name="Richardson P."/>
        </authorList>
    </citation>
    <scope>NUCLEOTIDE SEQUENCE [LARGE SCALE GENOMIC DNA]</scope>
    <source>
        <strain>DSM 10017 / MPOB</strain>
    </source>
</reference>
<sequence>MPQQWLPPIYWDGDAVAILDQRLLPQREAVIRCTSPKQVVAAIKNMAIRGAPAVGVAGAMALALGAVLIQAADARTFKSKFARLCRQVRTARPTGRNLGWAVDRIHALVEGNRDADVPRLHELIRREADLILAEDVAGNVAIGSWGKTVIPRGAGIMTYCNAGALATADYGTAVGVIRAAFDADPGIRVFSCETRPFLQGARLTVYELMKAGIPVTLITDNSIGSLMSRGMIDVVVVGADRIAANGDTANKIGTYMAAVLACTHGIPFYVAAPRSTIDASLPDGDGIPIEQRAPKEVTHFNGRRVAPQGAAALNAAFDVTPNKYITGIITEVGILSKPFGRAIRQALKA</sequence>
<name>MTNA_SYNFM</name>
<proteinExistence type="inferred from homology"/>